<proteinExistence type="evidence at protein level"/>
<evidence type="ECO:0000255" key="1">
    <source>
        <dbReference type="HAMAP-Rule" id="MF_02219"/>
    </source>
</evidence>
<evidence type="ECO:0000269" key="2">
    <source>
    </source>
</evidence>
<evidence type="ECO:0000269" key="3">
    <source>
    </source>
</evidence>
<evidence type="ECO:0000269" key="4">
    <source>
    </source>
</evidence>
<evidence type="ECO:0000269" key="5">
    <source>
    </source>
</evidence>
<evidence type="ECO:0000269" key="6">
    <source>
    </source>
</evidence>
<evidence type="ECO:0000269" key="7">
    <source>
    </source>
</evidence>
<evidence type="ECO:0000303" key="8">
    <source>
    </source>
</evidence>
<evidence type="ECO:0000303" key="9">
    <source>
    </source>
</evidence>
<evidence type="ECO:0000305" key="10"/>
<evidence type="ECO:0000305" key="11">
    <source>
    </source>
</evidence>
<evidence type="ECO:0007744" key="12">
    <source>
        <dbReference type="PDB" id="2Y9K"/>
    </source>
</evidence>
<evidence type="ECO:0007744" key="13">
    <source>
        <dbReference type="PDB" id="3J1V"/>
    </source>
</evidence>
<evidence type="ECO:0007744" key="14">
    <source>
        <dbReference type="PDB" id="4G08"/>
    </source>
</evidence>
<evidence type="ECO:0007744" key="15">
    <source>
        <dbReference type="PDB" id="5TCQ"/>
    </source>
</evidence>
<evidence type="ECO:0007744" key="16">
    <source>
        <dbReference type="PDB" id="5TCR"/>
    </source>
</evidence>
<evidence type="ECO:0007744" key="17">
    <source>
        <dbReference type="PDB" id="6DV3"/>
    </source>
</evidence>
<evidence type="ECO:0007744" key="18">
    <source>
        <dbReference type="PDB" id="6DV6"/>
    </source>
</evidence>
<evidence type="ECO:0007829" key="19">
    <source>
        <dbReference type="PDB" id="4G08"/>
    </source>
</evidence>
<evidence type="ECO:0007829" key="20">
    <source>
        <dbReference type="PDB" id="6PEE"/>
    </source>
</evidence>
<evidence type="ECO:0007829" key="21">
    <source>
        <dbReference type="PDB" id="6XFK"/>
    </source>
</evidence>
<gene>
    <name evidence="1 9" type="primary">sctC1</name>
    <name evidence="8" type="synonym">invG</name>
    <name type="ordered locus">STM2898</name>
</gene>
<organism>
    <name type="scientific">Salmonella typhimurium (strain LT2 / SGSC1412 / ATCC 700720)</name>
    <dbReference type="NCBI Taxonomy" id="99287"/>
    <lineage>
        <taxon>Bacteria</taxon>
        <taxon>Pseudomonadati</taxon>
        <taxon>Pseudomonadota</taxon>
        <taxon>Gammaproteobacteria</taxon>
        <taxon>Enterobacterales</taxon>
        <taxon>Enterobacteriaceae</taxon>
        <taxon>Salmonella</taxon>
    </lineage>
</organism>
<sequence>MKTHILLARVLACAALVLVTPGYSSEKIPVTGSGFVAKDDSLRTFFDAMALQLKEPVIVSKMAARKKITGNFEFHDPNALLEKLSLQLGLIWYFDGQAIYIYDASEMRNAVVSLRNVSLNEFNNFLKRSGLYNKNYPLRGDNRKGTFYVSGPPVYVDMVVNAATMMDKQNDGIELGRQKIGVMRLNNTFVGDRTYNLRDQKMVIPGIATAIERLLQGEEQPLGNIVSSEPPAMPAFSANGEKGKAANYAGGMSLQEALKQNAAAGNIKIVAYPDTNSLLVKGTAEQVHFIEMLVKALDVAKRHVELSLWIVDLNKSDLERLGTSWSGSITIGDKLGVSLNQSSISTLDGSRFIAAVNALEEKKQATVVSRPVLLTQENVPAIFDNNRTFYTKLIGERNVALEHVTYGTMIRVLPRFSADGQIEMSLDIEDGNDKTPQSDTTTSVDALPEVGRTLISTIARVPHGKSLLVGGYTRDANTDTVQSIPFLGKLPLIGSLFRYSSKNKSNVVRVFMIEPKEIVDPLTPDASESVNNILKQSGAWSGDDKLQKWVRVYLDRGQEAIK</sequence>
<accession>P35672</accession>
<reference key="1">
    <citation type="journal article" date="1995" name="Infect. Immun.">
        <title>Biological and genetic characterization of TnphoA mutants of Salmonella typhimurium TML in the context of gastroenteritis.</title>
        <authorList>
            <person name="Lodge J."/>
            <person name="Douce G.R."/>
            <person name="Amin I.I."/>
            <person name="Bolton A.J."/>
            <person name="Martin G.D."/>
            <person name="Chatfield S."/>
            <person name="Dougan G."/>
            <person name="Brown N.L."/>
            <person name="Stephen J."/>
        </authorList>
    </citation>
    <scope>NUCLEOTIDE SEQUENCE [GENOMIC DNA]</scope>
    <scope>DISRUPTION PHENOTYPE</scope>
    <source>
        <strain>TML</strain>
    </source>
</reference>
<reference key="2">
    <citation type="journal article" date="1994" name="Mol. Microbiol.">
        <title>The Salmonella typhimurium invasion genes invF and invG encode homologues of the AraC and PulD family of proteins.</title>
        <authorList>
            <person name="Kaniga K."/>
            <person name="Bossio J.C."/>
            <person name="Galan J.E."/>
        </authorList>
    </citation>
    <scope>NUCLEOTIDE SEQUENCE [GENOMIC DNA]</scope>
    <source>
        <strain>SR-11</strain>
    </source>
</reference>
<reference key="3">
    <citation type="journal article" date="2001" name="Nature">
        <title>Complete genome sequence of Salmonella enterica serovar Typhimurium LT2.</title>
        <authorList>
            <person name="McClelland M."/>
            <person name="Sanderson K.E."/>
            <person name="Spieth J."/>
            <person name="Clifton S.W."/>
            <person name="Latreille P."/>
            <person name="Courtney L."/>
            <person name="Porwollik S."/>
            <person name="Ali J."/>
            <person name="Dante M."/>
            <person name="Du F."/>
            <person name="Hou S."/>
            <person name="Layman D."/>
            <person name="Leonard S."/>
            <person name="Nguyen C."/>
            <person name="Scott K."/>
            <person name="Holmes A."/>
            <person name="Grewal N."/>
            <person name="Mulvaney E."/>
            <person name="Ryan E."/>
            <person name="Sun H."/>
            <person name="Florea L."/>
            <person name="Miller W."/>
            <person name="Stoneking T."/>
            <person name="Nhan M."/>
            <person name="Waterston R."/>
            <person name="Wilson R.K."/>
        </authorList>
    </citation>
    <scope>NUCLEOTIDE SEQUENCE [LARGE SCALE GENOMIC DNA]</scope>
    <source>
        <strain>LT2 / SGSC1412 / ATCC 700720</strain>
    </source>
</reference>
<reference key="4">
    <citation type="journal article" date="1998" name="Mol. Microbiol.">
        <title>Salmonella InvG forms a ring-like multimer that requires the InvH lipoprotein for outer membrane localization.</title>
        <authorList>
            <person name="Crago A.M."/>
            <person name="Koronakis V."/>
        </authorList>
    </citation>
    <scope>FUNCTION</scope>
    <scope>SUBUNIT</scope>
    <scope>SUBCELLULAR LOCATION</scope>
    <source>
        <strain>SJW1103</strain>
    </source>
</reference>
<reference key="5">
    <citation type="journal article" date="1998" name="Microbiol. Mol. Biol. Rev.">
        <title>Type III protein secretion systems in bacterial pathogens of animals and plants.</title>
        <authorList>
            <person name="Hueck C.J."/>
        </authorList>
    </citation>
    <scope>REVIEW</scope>
    <scope>NOMENCLATURE</scope>
</reference>
<reference key="6">
    <citation type="journal article" date="2018" name="FEMS Microbiol. Lett.">
        <title>Bacterial type III secretion systems: a complex device for the delivery of bacterial effector proteins into eukaryotic host cells.</title>
        <authorList>
            <person name="Wagner S."/>
            <person name="Grin I."/>
            <person name="Malmsheimer S."/>
            <person name="Singh N."/>
            <person name="Torres-Vargas C.E."/>
            <person name="Westerhausen S."/>
        </authorList>
    </citation>
    <scope>REVIEW</scope>
    <scope>SUBUNIT</scope>
</reference>
<reference evidence="12" key="7">
    <citation type="journal article" date="2011" name="Science">
        <title>Three-dimensional model of Salmonella's needle complex at subnanometer resolution.</title>
        <authorList>
            <person name="Schraidt O."/>
            <person name="Marlovits T.C."/>
        </authorList>
    </citation>
    <scope>STRUCTURE BY ELECTRON MICROSCOPY (8.30 ANGSTROMS) OF 34-170</scope>
    <scope>FUNCTION</scope>
    <scope>SUBUNIT</scope>
</reference>
<reference evidence="13 14" key="8">
    <citation type="journal article" date="2013" name="PLoS Pathog.">
        <title>A refined model of the prototypical Salmonella SPI-1 T3SS basal body reveals the molecular basis for its assembly.</title>
        <authorList>
            <person name="Bergeron J.R."/>
            <person name="Worrall L.J."/>
            <person name="Sgourakis N.G."/>
            <person name="DiMaio F."/>
            <person name="Pfuetzner R.A."/>
            <person name="Felise H.B."/>
            <person name="Vuckovic M."/>
            <person name="Yu A.C."/>
            <person name="Miller S.I."/>
            <person name="Baker D."/>
            <person name="Strynadka N.C."/>
        </authorList>
    </citation>
    <scope>X-RAY CRYSTALLOGRAPHY (1.80 ANGSTROMS) OF 22-178</scope>
    <scope>SUBUNIT</scope>
</reference>
<reference evidence="15 16" key="9">
    <citation type="journal article" date="2016" name="Nature">
        <title>Near-atomic-resolution cryo-EM analysis of the Salmonella T3S injectisome basal body.</title>
        <authorList>
            <person name="Worrall L.J."/>
            <person name="Hong C."/>
            <person name="Vuckovic M."/>
            <person name="Deng W."/>
            <person name="Bergeron J.R.C."/>
            <person name="Majewski D.D."/>
            <person name="Huang R.K."/>
            <person name="Spreter T."/>
            <person name="Finlay B.B."/>
            <person name="Yu Z."/>
            <person name="Strynadka N.C.J."/>
        </authorList>
    </citation>
    <scope>STRUCTURE BY ELECTRON MICROSCOPY (3.60 ANGSTROMS)</scope>
    <scope>FUNCTION</scope>
    <scope>SUBUNIT</scope>
    <scope>SUBCELLULAR LOCATION</scope>
</reference>
<reference evidence="17 18" key="10">
    <citation type="journal article" date="2018" name="Nat. Commun.">
        <title>Cryo-EM analysis of the T3S injectisome reveals the structure of the needle and open secretin.</title>
        <authorList>
            <person name="Hu J."/>
            <person name="Worrall L.J."/>
            <person name="Hong C."/>
            <person name="Vuckovic M."/>
            <person name="Atkinson C.E."/>
            <person name="Caveney N."/>
            <person name="Yu Z."/>
            <person name="Strynadka N.C.J."/>
        </authorList>
    </citation>
    <scope>STRUCTURE BY ELECTRON MICROSCOPY (3.90 ANGSTROMS)</scope>
    <scope>FUNCTION</scope>
    <scope>SUBUNIT</scope>
</reference>
<protein>
    <recommendedName>
        <fullName evidence="10">SPI-1 type 3 secretion system secretin</fullName>
        <shortName evidence="10">T3SS-1 secretin</shortName>
    </recommendedName>
    <alternativeName>
        <fullName>Protein InvG</fullName>
    </alternativeName>
</protein>
<keyword id="KW-0002">3D-structure</keyword>
<keyword id="KW-0998">Cell outer membrane</keyword>
<keyword id="KW-0472">Membrane</keyword>
<keyword id="KW-0653">Protein transport</keyword>
<keyword id="KW-1185">Reference proteome</keyword>
<keyword id="KW-0732">Signal</keyword>
<keyword id="KW-0811">Translocation</keyword>
<keyword id="KW-0813">Transport</keyword>
<keyword id="KW-0843">Virulence</keyword>
<comment type="function">
    <text evidence="2 4 5 7">Component of the type III secretion system (T3SS), also called injectisome, which is used to inject bacterial effector proteins into eukaryotic host cells (PubMed:27974800, PubMed:30242280, PubMed:9786184). Forms a ring-shaped multimeric structure with an apparent central pore in the outer membrane (PubMed:21385715, PubMed:27974800, PubMed:30242280, PubMed:9786184).</text>
</comment>
<comment type="subunit">
    <text evidence="2 3 4 5 7 11">The core secretion machinery of the T3SS is composed of approximately 20 different proteins, including cytoplasmic components, a base, an export apparatus and a needle (PubMed:30107569). This subunit is part of the base, which anchors the injectisome in the bacterial cell envelope (PubMed:21385715, PubMed:23633951, PubMed:27974800, PubMed:30242280). Forms a stable homooligomeric complex (PubMed:21385715, PubMed:23633951, PubMed:27974800, PubMed:30242280, PubMed:9786184). The complex is composed of 15 subunits (PubMed:21385715, PubMed:23633951, PubMed:27974800).</text>
</comment>
<comment type="interaction">
    <interactant intactId="EBI-15771877">
        <id>P35672</id>
    </interactant>
    <interactant intactId="EBI-15771877">
        <id>P35672</id>
        <label>sctC1</label>
    </interactant>
    <organismsDiffer>false</organismsDiffer>
    <experiments>2</experiments>
</comment>
<comment type="subcellular location">
    <subcellularLocation>
        <location evidence="1 4 7">Cell outer membrane</location>
    </subcellularLocation>
    <text evidence="7">Localization to the outer membrane requires InvH/SctG.</text>
</comment>
<comment type="disruption phenotype">
    <text evidence="6">Insertion mutants are hypoinvasive in the HEp-2 cell assay.</text>
</comment>
<comment type="similarity">
    <text evidence="1 10">Belongs to the bacterial secretin family. T3SS SctC subfamily.</text>
</comment>
<dbReference type="EMBL" id="X75302">
    <property type="protein sequence ID" value="CAA53049.1"/>
    <property type="molecule type" value="Genomic_DNA"/>
</dbReference>
<dbReference type="EMBL" id="U08280">
    <property type="protein sequence ID" value="AAA74040.1"/>
    <property type="molecule type" value="Genomic_DNA"/>
</dbReference>
<dbReference type="EMBL" id="AE006468">
    <property type="protein sequence ID" value="AAL21778.1"/>
    <property type="molecule type" value="Genomic_DNA"/>
</dbReference>
<dbReference type="PIR" id="S54420">
    <property type="entry name" value="S54420"/>
</dbReference>
<dbReference type="RefSeq" id="NP_461819.1">
    <property type="nucleotide sequence ID" value="NC_003197.2"/>
</dbReference>
<dbReference type="RefSeq" id="WP_000848113.1">
    <property type="nucleotide sequence ID" value="NC_003197.2"/>
</dbReference>
<dbReference type="PDB" id="2Y9K">
    <property type="method" value="EM"/>
    <property type="resolution" value="8.30 A"/>
    <property type="chains" value="A/B/C/D/E/F/G/H/I/J/K/L/M/N/O=34-170"/>
</dbReference>
<dbReference type="PDB" id="3J1V">
    <property type="method" value="EM"/>
    <property type="chains" value="A/B/C/D/E/F/G/H/I/J/K/L/M/N/O=22-178"/>
</dbReference>
<dbReference type="PDB" id="4G08">
    <property type="method" value="X-ray"/>
    <property type="resolution" value="1.80 A"/>
    <property type="chains" value="A=22-178"/>
</dbReference>
<dbReference type="PDB" id="5TCQ">
    <property type="method" value="EM"/>
    <property type="resolution" value="3.60 A"/>
    <property type="chains" value="A/B/C/D/E/F/G/H/I/J/K/L/M/N/O=1-562"/>
</dbReference>
<dbReference type="PDB" id="5TCR">
    <property type="method" value="EM"/>
    <property type="resolution" value="6.30 A"/>
    <property type="chains" value="A/B/C/D/E/F/G/H/I/J/K/L/M/N/O=1-562"/>
</dbReference>
<dbReference type="PDB" id="6DV3">
    <property type="method" value="EM"/>
    <property type="resolution" value="4.10 A"/>
    <property type="chains" value="A/B/C/D/E/F/G/H/I/J/K/L/M/N/O=1-562"/>
</dbReference>
<dbReference type="PDB" id="6DV6">
    <property type="method" value="EM"/>
    <property type="resolution" value="3.90 A"/>
    <property type="chains" value="A/B/C/D/E/F/G/H/I/J/K/L/M/N/O=1-562"/>
</dbReference>
<dbReference type="PDB" id="6PEE">
    <property type="method" value="EM"/>
    <property type="resolution" value="3.42 A"/>
    <property type="chains" value="A/B/C/D/F/G/H/I/J/K/L/M/N/O/P=1-562"/>
</dbReference>
<dbReference type="PDB" id="6PEM">
    <property type="method" value="EM"/>
    <property type="resolution" value="3.50 A"/>
    <property type="chains" value="A/B/C/D/F/G/H/I/J/K/L/M/N/O/P/Q=1-562"/>
</dbReference>
<dbReference type="PDB" id="6PEP">
    <property type="method" value="EM"/>
    <property type="resolution" value="3.80 A"/>
    <property type="chains" value="A/B/C/D/F/G/H/I/J/K/L/M/N/O/P/Q=1-562"/>
</dbReference>
<dbReference type="PDB" id="6Q14">
    <property type="method" value="EM"/>
    <property type="resolution" value="3.80 A"/>
    <property type="chains" value="A/B/C/D/F/G/H/I/J/K/L/M/N/O/P/Q=1-562"/>
</dbReference>
<dbReference type="PDB" id="6Q15">
    <property type="method" value="EM"/>
    <property type="resolution" value="5.15 A"/>
    <property type="chains" value="A/B/C/D/F/G/H/I/J/K/L/M/N/O/P/Q=1-562"/>
</dbReference>
<dbReference type="PDB" id="6Q16">
    <property type="method" value="EM"/>
    <property type="resolution" value="4.10 A"/>
    <property type="chains" value="A/B/C/D/F/G/H/I/J/K/L/M/N/O/P/Q=1-562"/>
</dbReference>
<dbReference type="PDB" id="6XFK">
    <property type="method" value="X-ray"/>
    <property type="resolution" value="1.85 A"/>
    <property type="chains" value="B=543-558"/>
</dbReference>
<dbReference type="PDB" id="6XFL">
    <property type="method" value="NMR"/>
    <property type="chains" value="B=520-562"/>
</dbReference>
<dbReference type="PDB" id="7AH9">
    <property type="method" value="EM"/>
    <property type="resolution" value="3.30 A"/>
    <property type="chains" value="5A/5B/5C/5D/5E/5F/5G/5H/5I/5J/5K/5L/5M/5N/5O/5P=1-562"/>
</dbReference>
<dbReference type="PDB" id="7AHI">
    <property type="method" value="EM"/>
    <property type="resolution" value="3.30 A"/>
    <property type="chains" value="5A/5B/5C/5D/5E/5F/5G/5H/5I/5J/5K/5L/5M/5N/5O/5P=1-562"/>
</dbReference>
<dbReference type="PDBsum" id="2Y9K"/>
<dbReference type="PDBsum" id="3J1V"/>
<dbReference type="PDBsum" id="4G08"/>
<dbReference type="PDBsum" id="5TCQ"/>
<dbReference type="PDBsum" id="5TCR"/>
<dbReference type="PDBsum" id="6DV3"/>
<dbReference type="PDBsum" id="6DV6"/>
<dbReference type="PDBsum" id="6PEE"/>
<dbReference type="PDBsum" id="6PEM"/>
<dbReference type="PDBsum" id="6PEP"/>
<dbReference type="PDBsum" id="6Q14"/>
<dbReference type="PDBsum" id="6Q15"/>
<dbReference type="PDBsum" id="6Q16"/>
<dbReference type="PDBsum" id="6XFK"/>
<dbReference type="PDBsum" id="6XFL"/>
<dbReference type="PDBsum" id="7AH9"/>
<dbReference type="PDBsum" id="7AHI"/>
<dbReference type="BMRB" id="P35672"/>
<dbReference type="EMDB" id="EMD-11781"/>
<dbReference type="EMDB" id="EMD-1871"/>
<dbReference type="EMDB" id="EMD-20556"/>
<dbReference type="EMDB" id="EMD-8399"/>
<dbReference type="EMDB" id="EMD-8400"/>
<dbReference type="EMDB" id="EMD-8914"/>
<dbReference type="EMDB" id="EMD-8915"/>
<dbReference type="SMR" id="P35672"/>
<dbReference type="DIP" id="DIP-48517N"/>
<dbReference type="IntAct" id="P35672">
    <property type="interactions" value="2"/>
</dbReference>
<dbReference type="STRING" id="99287.STM2898"/>
<dbReference type="TCDB" id="1.B.22.3.2">
    <property type="family name" value="the outer bacterial membrane secretin (secretin) family"/>
</dbReference>
<dbReference type="PaxDb" id="99287-STM2898"/>
<dbReference type="GeneID" id="1254421"/>
<dbReference type="KEGG" id="stm:STM2898"/>
<dbReference type="PATRIC" id="fig|99287.12.peg.3054"/>
<dbReference type="HOGENOM" id="CLU_022474_3_0_6"/>
<dbReference type="OMA" id="VWYDDGA"/>
<dbReference type="PhylomeDB" id="P35672"/>
<dbReference type="BioCyc" id="SENT99287:STM2898-MONOMER"/>
<dbReference type="EvolutionaryTrace" id="P35672"/>
<dbReference type="PHI-base" id="PHI:8730"/>
<dbReference type="Proteomes" id="UP000001014">
    <property type="component" value="Chromosome"/>
</dbReference>
<dbReference type="GO" id="GO:0009279">
    <property type="term" value="C:cell outer membrane"/>
    <property type="evidence" value="ECO:0007669"/>
    <property type="project" value="UniProtKB-SubCell"/>
</dbReference>
<dbReference type="GO" id="GO:0015627">
    <property type="term" value="C:type II protein secretion system complex"/>
    <property type="evidence" value="ECO:0000318"/>
    <property type="project" value="GO_Central"/>
</dbReference>
<dbReference type="GO" id="GO:0030257">
    <property type="term" value="C:type III protein secretion system complex"/>
    <property type="evidence" value="ECO:0000315"/>
    <property type="project" value="CACAO"/>
</dbReference>
<dbReference type="GO" id="GO:0042802">
    <property type="term" value="F:identical protein binding"/>
    <property type="evidence" value="ECO:0000353"/>
    <property type="project" value="IntAct"/>
</dbReference>
<dbReference type="GO" id="GO:0009306">
    <property type="term" value="P:protein secretion"/>
    <property type="evidence" value="ECO:0000318"/>
    <property type="project" value="GO_Central"/>
</dbReference>
<dbReference type="GO" id="GO:0030254">
    <property type="term" value="P:protein secretion by the type III secretion system"/>
    <property type="evidence" value="ECO:0007669"/>
    <property type="project" value="UniProtKB-UniRule"/>
</dbReference>
<dbReference type="FunFam" id="3.30.1370.120:FF:000005">
    <property type="entry name" value="Type III secretion system outer membrane pore InvG"/>
    <property type="match status" value="1"/>
</dbReference>
<dbReference type="Gene3D" id="3.30.1370.120">
    <property type="match status" value="2"/>
</dbReference>
<dbReference type="Gene3D" id="3.55.50.30">
    <property type="match status" value="1"/>
</dbReference>
<dbReference type="HAMAP" id="MF_02219">
    <property type="entry name" value="Type_III_secretin"/>
    <property type="match status" value="1"/>
</dbReference>
<dbReference type="InterPro" id="IPR050810">
    <property type="entry name" value="Bact_Secretion_Sys_Channel"/>
</dbReference>
<dbReference type="InterPro" id="IPR005644">
    <property type="entry name" value="NolW-like"/>
</dbReference>
<dbReference type="InterPro" id="IPR038591">
    <property type="entry name" value="NolW-like_sf"/>
</dbReference>
<dbReference type="InterPro" id="IPR004846">
    <property type="entry name" value="T2SS/T3SS_dom"/>
</dbReference>
<dbReference type="InterPro" id="IPR004845">
    <property type="entry name" value="T2SS_GspD_CS"/>
</dbReference>
<dbReference type="InterPro" id="IPR049034">
    <property type="entry name" value="T3S_SPI-1_N0"/>
</dbReference>
<dbReference type="InterPro" id="IPR003522">
    <property type="entry name" value="T3SS_OM_pore_YscC"/>
</dbReference>
<dbReference type="NCBIfam" id="TIGR02516">
    <property type="entry name" value="type_III_yscC"/>
    <property type="match status" value="1"/>
</dbReference>
<dbReference type="PANTHER" id="PTHR30332">
    <property type="entry name" value="PROBABLE GENERAL SECRETION PATHWAY PROTEIN D"/>
    <property type="match status" value="1"/>
</dbReference>
<dbReference type="PANTHER" id="PTHR30332:SF5">
    <property type="entry name" value="SPI-1 TYPE 3 SECRETION SYSTEM SECRETIN"/>
    <property type="match status" value="1"/>
</dbReference>
<dbReference type="Pfam" id="PF00263">
    <property type="entry name" value="Secretin"/>
    <property type="match status" value="1"/>
</dbReference>
<dbReference type="Pfam" id="PF03958">
    <property type="entry name" value="Secretin_N"/>
    <property type="match status" value="2"/>
</dbReference>
<dbReference type="Pfam" id="PF21304">
    <property type="entry name" value="T3S_SPI-1_N0"/>
    <property type="match status" value="1"/>
</dbReference>
<dbReference type="PRINTS" id="PR01337">
    <property type="entry name" value="TYPE3OMGPROT"/>
</dbReference>
<dbReference type="PROSITE" id="PS00875">
    <property type="entry name" value="T2SP_D"/>
    <property type="match status" value="1"/>
</dbReference>
<feature type="signal peptide" evidence="1">
    <location>
        <begin position="1"/>
        <end position="24"/>
    </location>
</feature>
<feature type="chain" id="PRO_0000013111" description="SPI-1 type 3 secretion system secretin" evidence="1">
    <location>
        <begin position="25"/>
        <end position="562"/>
    </location>
</feature>
<feature type="sequence conflict" description="In Ref. 2; AAA74040." evidence="10" ref="2">
    <original>A</original>
    <variation>R</variation>
    <location>
        <position position="12"/>
    </location>
</feature>
<feature type="sequence conflict" description="In Ref. 2; AAA74040." evidence="10" ref="2">
    <original>E</original>
    <variation>Q</variation>
    <location>
        <position position="121"/>
    </location>
</feature>
<feature type="sequence conflict" description="In Ref. 2; AAA74040." evidence="10" ref="2">
    <original>LRDQKMVIP</original>
    <variation>CAIRKWLFR</variation>
    <location>
        <begin position="197"/>
        <end position="205"/>
    </location>
</feature>
<feature type="sequence conflict" description="In Ref. 2; AAA74040." evidence="10" ref="2">
    <original>AMPAFSANG</original>
    <variation>RCQRFQRM</variation>
    <location>
        <begin position="232"/>
        <end position="240"/>
    </location>
</feature>
<feature type="sequence conflict" description="In Ref. 2; AAA74040." evidence="10" ref="2">
    <original>G</original>
    <variation>S</variation>
    <location>
        <position position="243"/>
    </location>
</feature>
<feature type="sequence conflict" description="In Ref. 2; AAA74040." evidence="10" ref="2">
    <original>AAA</original>
    <variation>KPAEQ</variation>
    <location>
        <begin position="262"/>
        <end position="264"/>
    </location>
</feature>
<feature type="sequence conflict" description="In Ref. 1; CAA53049 and 2; AAA74040." evidence="10" ref="1 2">
    <original>S</original>
    <variation>T</variation>
    <location>
        <position position="328"/>
    </location>
</feature>
<feature type="sequence conflict" description="In Ref. 2; AAA74040." evidence="10" ref="2">
    <original>I</original>
    <variation>V</variation>
    <location>
        <position position="329"/>
    </location>
</feature>
<feature type="sequence conflict" description="In Ref. 2; AAA74040." evidence="10" ref="2">
    <original>RPVLLTQENVP</original>
    <variation>APGITSSGKCS</variation>
    <location>
        <begin position="370"/>
        <end position="380"/>
    </location>
</feature>
<feature type="strand" evidence="19">
    <location>
        <begin position="35"/>
        <end position="41"/>
    </location>
</feature>
<feature type="helix" evidence="19">
    <location>
        <begin position="42"/>
        <end position="49"/>
    </location>
</feature>
<feature type="helix" evidence="19">
    <location>
        <begin position="50"/>
        <end position="52"/>
    </location>
</feature>
<feature type="strand" evidence="19">
    <location>
        <begin position="57"/>
        <end position="59"/>
    </location>
</feature>
<feature type="helix" evidence="19">
    <location>
        <begin position="61"/>
        <end position="64"/>
    </location>
</feature>
<feature type="strand" evidence="19">
    <location>
        <begin position="67"/>
        <end position="72"/>
    </location>
</feature>
<feature type="helix" evidence="19">
    <location>
        <begin position="77"/>
        <end position="88"/>
    </location>
</feature>
<feature type="strand" evidence="19">
    <location>
        <begin position="90"/>
        <end position="94"/>
    </location>
</feature>
<feature type="strand" evidence="19">
    <location>
        <begin position="99"/>
        <end position="103"/>
    </location>
</feature>
<feature type="helix" evidence="19">
    <location>
        <begin position="104"/>
        <end position="106"/>
    </location>
</feature>
<feature type="strand" evidence="19">
    <location>
        <begin position="108"/>
        <end position="113"/>
    </location>
</feature>
<feature type="helix" evidence="19">
    <location>
        <begin position="119"/>
        <end position="128"/>
    </location>
</feature>
<feature type="strand" evidence="19">
    <location>
        <begin position="144"/>
        <end position="151"/>
    </location>
</feature>
<feature type="helix" evidence="19">
    <location>
        <begin position="153"/>
        <end position="169"/>
    </location>
</feature>
<feature type="strand" evidence="20">
    <location>
        <begin position="179"/>
        <end position="184"/>
    </location>
</feature>
<feature type="strand" evidence="20">
    <location>
        <begin position="186"/>
        <end position="188"/>
    </location>
</feature>
<feature type="strand" evidence="20">
    <location>
        <begin position="193"/>
        <end position="197"/>
    </location>
</feature>
<feature type="strand" evidence="20">
    <location>
        <begin position="200"/>
        <end position="204"/>
    </location>
</feature>
<feature type="helix" evidence="20">
    <location>
        <begin position="207"/>
        <end position="214"/>
    </location>
</feature>
<feature type="strand" evidence="20">
    <location>
        <begin position="268"/>
        <end position="272"/>
    </location>
</feature>
<feature type="turn" evidence="20">
    <location>
        <begin position="273"/>
        <end position="276"/>
    </location>
</feature>
<feature type="strand" evidence="20">
    <location>
        <begin position="277"/>
        <end position="282"/>
    </location>
</feature>
<feature type="helix" evidence="20">
    <location>
        <begin position="284"/>
        <end position="294"/>
    </location>
</feature>
<feature type="strand" evidence="20">
    <location>
        <begin position="303"/>
        <end position="325"/>
    </location>
</feature>
<feature type="turn" evidence="20">
    <location>
        <begin position="332"/>
        <end position="334"/>
    </location>
</feature>
<feature type="strand" evidence="20">
    <location>
        <begin position="335"/>
        <end position="340"/>
    </location>
</feature>
<feature type="strand" evidence="20">
    <location>
        <begin position="352"/>
        <end position="376"/>
    </location>
</feature>
<feature type="strand" evidence="20">
    <location>
        <begin position="381"/>
        <end position="393"/>
    </location>
</feature>
<feature type="strand" evidence="20">
    <location>
        <begin position="396"/>
        <end position="398"/>
    </location>
</feature>
<feature type="strand" evidence="20">
    <location>
        <begin position="400"/>
        <end position="412"/>
    </location>
</feature>
<feature type="strand" evidence="20">
    <location>
        <begin position="418"/>
        <end position="420"/>
    </location>
</feature>
<feature type="strand" evidence="20">
    <location>
        <begin position="422"/>
        <end position="429"/>
    </location>
</feature>
<feature type="strand" evidence="20">
    <location>
        <begin position="438"/>
        <end position="440"/>
    </location>
</feature>
<feature type="helix" evidence="20">
    <location>
        <begin position="441"/>
        <end position="443"/>
    </location>
</feature>
<feature type="strand" evidence="20">
    <location>
        <begin position="444"/>
        <end position="446"/>
    </location>
</feature>
<feature type="strand" evidence="20">
    <location>
        <begin position="450"/>
        <end position="461"/>
    </location>
</feature>
<feature type="strand" evidence="20">
    <location>
        <begin position="467"/>
        <end position="483"/>
    </location>
</feature>
<feature type="helix" evidence="20">
    <location>
        <begin position="487"/>
        <end position="489"/>
    </location>
</feature>
<feature type="strand" evidence="20">
    <location>
        <begin position="491"/>
        <end position="493"/>
    </location>
</feature>
<feature type="helix" evidence="20">
    <location>
        <begin position="494"/>
        <end position="496"/>
    </location>
</feature>
<feature type="strand" evidence="20">
    <location>
        <begin position="499"/>
        <end position="518"/>
    </location>
</feature>
<feature type="helix" evidence="20">
    <location>
        <begin position="526"/>
        <end position="537"/>
    </location>
</feature>
<feature type="helix" evidence="21">
    <location>
        <begin position="547"/>
        <end position="555"/>
    </location>
</feature>
<name>SCTC1_SALTY</name>